<reference key="1">
    <citation type="journal article" date="2007" name="Science">
        <title>Genome sequence of Aedes aegypti, a major arbovirus vector.</title>
        <authorList>
            <person name="Nene V."/>
            <person name="Wortman J.R."/>
            <person name="Lawson D."/>
            <person name="Haas B.J."/>
            <person name="Kodira C.D."/>
            <person name="Tu Z.J."/>
            <person name="Loftus B.J."/>
            <person name="Xi Z."/>
            <person name="Megy K."/>
            <person name="Grabherr M."/>
            <person name="Ren Q."/>
            <person name="Zdobnov E.M."/>
            <person name="Lobo N.F."/>
            <person name="Campbell K.S."/>
            <person name="Brown S.E."/>
            <person name="Bonaldo M.F."/>
            <person name="Zhu J."/>
            <person name="Sinkins S.P."/>
            <person name="Hogenkamp D.G."/>
            <person name="Amedeo P."/>
            <person name="Arensburger P."/>
            <person name="Atkinson P.W."/>
            <person name="Bidwell S.L."/>
            <person name="Biedler J."/>
            <person name="Birney E."/>
            <person name="Bruggner R.V."/>
            <person name="Costas J."/>
            <person name="Coy M.R."/>
            <person name="Crabtree J."/>
            <person name="Crawford M."/>
            <person name="DeBruyn B."/>
            <person name="DeCaprio D."/>
            <person name="Eiglmeier K."/>
            <person name="Eisenstadt E."/>
            <person name="El-Dorry H."/>
            <person name="Gelbart W.M."/>
            <person name="Gomes S.L."/>
            <person name="Hammond M."/>
            <person name="Hannick L.I."/>
            <person name="Hogan J.R."/>
            <person name="Holmes M.H."/>
            <person name="Jaffe D."/>
            <person name="Johnston S.J."/>
            <person name="Kennedy R.C."/>
            <person name="Koo H."/>
            <person name="Kravitz S."/>
            <person name="Kriventseva E.V."/>
            <person name="Kulp D."/>
            <person name="Labutti K."/>
            <person name="Lee E."/>
            <person name="Li S."/>
            <person name="Lovin D.D."/>
            <person name="Mao C."/>
            <person name="Mauceli E."/>
            <person name="Menck C.F."/>
            <person name="Miller J.R."/>
            <person name="Montgomery P."/>
            <person name="Mori A."/>
            <person name="Nascimento A.L."/>
            <person name="Naveira H.F."/>
            <person name="Nusbaum C."/>
            <person name="O'Leary S.B."/>
            <person name="Orvis J."/>
            <person name="Pertea M."/>
            <person name="Quesneville H."/>
            <person name="Reidenbach K.R."/>
            <person name="Rogers Y.-H.C."/>
            <person name="Roth C.W."/>
            <person name="Schneider J.R."/>
            <person name="Schatz M."/>
            <person name="Shumway M."/>
            <person name="Stanke M."/>
            <person name="Stinson E.O."/>
            <person name="Tubio J.M.C."/>
            <person name="Vanzee J.P."/>
            <person name="Verjovski-Almeida S."/>
            <person name="Werner D."/>
            <person name="White O.R."/>
            <person name="Wyder S."/>
            <person name="Zeng Q."/>
            <person name="Zhao Q."/>
            <person name="Zhao Y."/>
            <person name="Hill C.A."/>
            <person name="Raikhel A.S."/>
            <person name="Soares M.B."/>
            <person name="Knudson D.L."/>
            <person name="Lee N.H."/>
            <person name="Galagan J."/>
            <person name="Salzberg S.L."/>
            <person name="Paulsen I.T."/>
            <person name="Dimopoulos G."/>
            <person name="Collins F.H."/>
            <person name="Bruce B."/>
            <person name="Fraser-Liggett C.M."/>
            <person name="Severson D.W."/>
        </authorList>
    </citation>
    <scope>NUCLEOTIDE SEQUENCE [LARGE SCALE GENOMIC DNA]</scope>
    <source>
        <strain>LVPib12</strain>
    </source>
</reference>
<dbReference type="EMBL" id="CH477379">
    <property type="protein sequence ID" value="EAT42242.1"/>
    <property type="molecule type" value="Genomic_DNA"/>
</dbReference>
<dbReference type="SMR" id="Q177A7"/>
<dbReference type="FunCoup" id="Q177A7">
    <property type="interactions" value="2301"/>
</dbReference>
<dbReference type="STRING" id="7159.Q177A7"/>
<dbReference type="PaxDb" id="7159-AAEL006193-PA"/>
<dbReference type="EnsemblMetazoa" id="AAEL006193-RA">
    <property type="protein sequence ID" value="AAEL006193-PA"/>
    <property type="gene ID" value="AAEL006193"/>
</dbReference>
<dbReference type="EnsemblMetazoa" id="AAEL006193-RB">
    <property type="protein sequence ID" value="AAEL006193-PB"/>
    <property type="gene ID" value="AAEL006193"/>
</dbReference>
<dbReference type="EnsemblMetazoa" id="AAEL006193-RC">
    <property type="protein sequence ID" value="AAEL006193-PC"/>
    <property type="gene ID" value="AAEL006193"/>
</dbReference>
<dbReference type="GeneID" id="5567595"/>
<dbReference type="KEGG" id="aag:5567595"/>
<dbReference type="CTD" id="29079"/>
<dbReference type="VEuPathDB" id="VectorBase:AAEL006193"/>
<dbReference type="eggNOG" id="KOG4552">
    <property type="taxonomic scope" value="Eukaryota"/>
</dbReference>
<dbReference type="HOGENOM" id="CLU_082233_1_0_1"/>
<dbReference type="InParanoid" id="Q177A7"/>
<dbReference type="OMA" id="LEMRLGM"/>
<dbReference type="OrthoDB" id="1929813at2759"/>
<dbReference type="PhylomeDB" id="Q177A7"/>
<dbReference type="Proteomes" id="UP000008820">
    <property type="component" value="Chromosome 1"/>
</dbReference>
<dbReference type="Proteomes" id="UP000682892">
    <property type="component" value="Unassembled WGS sequence"/>
</dbReference>
<dbReference type="GO" id="GO:0070847">
    <property type="term" value="C:core mediator complex"/>
    <property type="evidence" value="ECO:0007669"/>
    <property type="project" value="TreeGrafter"/>
</dbReference>
<dbReference type="GO" id="GO:0016592">
    <property type="term" value="C:mediator complex"/>
    <property type="evidence" value="ECO:0007669"/>
    <property type="project" value="InterPro"/>
</dbReference>
<dbReference type="GO" id="GO:0003712">
    <property type="term" value="F:transcription coregulator activity"/>
    <property type="evidence" value="ECO:0007669"/>
    <property type="project" value="InterPro"/>
</dbReference>
<dbReference type="GO" id="GO:0006357">
    <property type="term" value="P:regulation of transcription by RNA polymerase II"/>
    <property type="evidence" value="ECO:0007669"/>
    <property type="project" value="InterPro"/>
</dbReference>
<dbReference type="InterPro" id="IPR019258">
    <property type="entry name" value="Mediator_Med4"/>
</dbReference>
<dbReference type="PANTHER" id="PTHR13208">
    <property type="entry name" value="MEDIATOR OF RNA POLYMERASE II TRANSCRIPTION SUBUNIT 4"/>
    <property type="match status" value="1"/>
</dbReference>
<dbReference type="PANTHER" id="PTHR13208:SF2">
    <property type="entry name" value="MEDIATOR OF RNA POLYMERASE II TRANSCRIPTION SUBUNIT 4"/>
    <property type="match status" value="1"/>
</dbReference>
<dbReference type="Pfam" id="PF10018">
    <property type="entry name" value="Med4"/>
    <property type="match status" value="1"/>
</dbReference>
<keyword id="KW-0010">Activator</keyword>
<keyword id="KW-0175">Coiled coil</keyword>
<keyword id="KW-0539">Nucleus</keyword>
<keyword id="KW-1185">Reference proteome</keyword>
<keyword id="KW-0804">Transcription</keyword>
<keyword id="KW-0805">Transcription regulation</keyword>
<organism>
    <name type="scientific">Aedes aegypti</name>
    <name type="common">Yellowfever mosquito</name>
    <name type="synonym">Culex aegypti</name>
    <dbReference type="NCBI Taxonomy" id="7159"/>
    <lineage>
        <taxon>Eukaryota</taxon>
        <taxon>Metazoa</taxon>
        <taxon>Ecdysozoa</taxon>
        <taxon>Arthropoda</taxon>
        <taxon>Hexapoda</taxon>
        <taxon>Insecta</taxon>
        <taxon>Pterygota</taxon>
        <taxon>Neoptera</taxon>
        <taxon>Endopterygota</taxon>
        <taxon>Diptera</taxon>
        <taxon>Nematocera</taxon>
        <taxon>Culicoidea</taxon>
        <taxon>Culicidae</taxon>
        <taxon>Culicinae</taxon>
        <taxon>Aedini</taxon>
        <taxon>Aedes</taxon>
        <taxon>Stegomyia</taxon>
    </lineage>
</organism>
<feature type="chain" id="PRO_0000302068" description="Mediator of RNA polymerase II transcription subunit 4">
    <location>
        <begin position="1"/>
        <end position="263"/>
    </location>
</feature>
<feature type="region of interest" description="Disordered" evidence="3">
    <location>
        <begin position="221"/>
        <end position="263"/>
    </location>
</feature>
<feature type="coiled-coil region" evidence="2">
    <location>
        <begin position="62"/>
        <end position="106"/>
    </location>
</feature>
<feature type="compositionally biased region" description="Low complexity" evidence="3">
    <location>
        <begin position="251"/>
        <end position="263"/>
    </location>
</feature>
<accession>Q177A7</accession>
<evidence type="ECO:0000250" key="1"/>
<evidence type="ECO:0000255" key="2"/>
<evidence type="ECO:0000256" key="3">
    <source>
        <dbReference type="SAM" id="MobiDB-lite"/>
    </source>
</evidence>
<evidence type="ECO:0000305" key="4"/>
<sequence length="263" mass="28681">MSSYHLSTKERLLAIVDDIEIISKELIENTIAPKHQKMSSADHGQLVELLVSKDKELKATLQLAAEQAGIEKKMDGLREQVKEQDEEINQLQKQLKEAEHILATSIFQGRQKLSSINKAVKRPVSSEELIKFAHRISASNAICAPLTWQQGDLRRPYPTDIEMRLGFLGKSDLNINGHNAPNQNNLNEMQRNAAGAGAGSGVADIPASAQNQFAWHPSGELHMTMGAGAGSVSLDTRSHKDASQDDVEVMSTDSSSSSSSDSQ</sequence>
<name>MED4_AEDAE</name>
<protein>
    <recommendedName>
        <fullName>Mediator of RNA polymerase II transcription subunit 4</fullName>
    </recommendedName>
    <alternativeName>
        <fullName>Mediator complex subunit 4</fullName>
    </alternativeName>
</protein>
<proteinExistence type="inferred from homology"/>
<comment type="function">
    <text evidence="1">Component of the Mediator complex, a coactivator involved in the regulated transcription of nearly all RNA polymerase II-dependent genes. Mediator functions as a bridge to convey information from gene-specific regulatory proteins to the basal RNA polymerase II transcription machinery. Mediator is recruited to promoters by direct interactions with regulatory proteins and serves as a scaffold for the assembly of a functional preinitiation complex with RNA polymerase II and the general transcription factors (By similarity).</text>
</comment>
<comment type="subunit">
    <text evidence="1">Component of the Mediator complex.</text>
</comment>
<comment type="subcellular location">
    <subcellularLocation>
        <location evidence="1">Nucleus</location>
    </subcellularLocation>
</comment>
<comment type="similarity">
    <text evidence="4">Belongs to the Mediator complex subunit 4 family.</text>
</comment>
<gene>
    <name type="primary">MED4</name>
    <name type="ORF">AAEL006193</name>
</gene>